<proteinExistence type="inferred from homology"/>
<dbReference type="EMBL" id="AE002098">
    <property type="protein sequence ID" value="AAF41142.1"/>
    <property type="molecule type" value="Genomic_DNA"/>
</dbReference>
<dbReference type="PIR" id="D81166">
    <property type="entry name" value="D81166"/>
</dbReference>
<dbReference type="RefSeq" id="NP_273771.1">
    <property type="nucleotide sequence ID" value="NC_003112.2"/>
</dbReference>
<dbReference type="RefSeq" id="WP_002214080.1">
    <property type="nucleotide sequence ID" value="NC_003112.2"/>
</dbReference>
<dbReference type="SMR" id="P64393"/>
<dbReference type="FunCoup" id="P64393">
    <property type="interactions" value="195"/>
</dbReference>
<dbReference type="STRING" id="122586.NMB0729"/>
<dbReference type="PaxDb" id="122586-NMB0729"/>
<dbReference type="KEGG" id="nme:NMB0729"/>
<dbReference type="PATRIC" id="fig|122586.8.peg.927"/>
<dbReference type="HOGENOM" id="CLU_105066_1_3_4"/>
<dbReference type="InParanoid" id="P64393"/>
<dbReference type="OrthoDB" id="9797747at2"/>
<dbReference type="Proteomes" id="UP000000425">
    <property type="component" value="Chromosome"/>
</dbReference>
<dbReference type="GO" id="GO:0005829">
    <property type="term" value="C:cytosol"/>
    <property type="evidence" value="ECO:0000318"/>
    <property type="project" value="GO_Central"/>
</dbReference>
<dbReference type="GO" id="GO:0003677">
    <property type="term" value="F:DNA binding"/>
    <property type="evidence" value="ECO:0000318"/>
    <property type="project" value="GO_Central"/>
</dbReference>
<dbReference type="GO" id="GO:0030527">
    <property type="term" value="F:structural constituent of chromatin"/>
    <property type="evidence" value="ECO:0007669"/>
    <property type="project" value="InterPro"/>
</dbReference>
<dbReference type="GO" id="GO:0006310">
    <property type="term" value="P:DNA recombination"/>
    <property type="evidence" value="ECO:0007669"/>
    <property type="project" value="UniProtKB-UniRule"/>
</dbReference>
<dbReference type="GO" id="GO:0009893">
    <property type="term" value="P:positive regulation of metabolic process"/>
    <property type="evidence" value="ECO:0007669"/>
    <property type="project" value="UniProtKB-ARBA"/>
</dbReference>
<dbReference type="GO" id="GO:0006355">
    <property type="term" value="P:regulation of DNA-templated transcription"/>
    <property type="evidence" value="ECO:0007669"/>
    <property type="project" value="UniProtKB-UniRule"/>
</dbReference>
<dbReference type="GO" id="GO:0006417">
    <property type="term" value="P:regulation of translation"/>
    <property type="evidence" value="ECO:0007669"/>
    <property type="project" value="UniProtKB-UniRule"/>
</dbReference>
<dbReference type="CDD" id="cd13835">
    <property type="entry name" value="IHF_A"/>
    <property type="match status" value="1"/>
</dbReference>
<dbReference type="FunFam" id="4.10.520.10:FF:000002">
    <property type="entry name" value="Integration host factor subunit alpha"/>
    <property type="match status" value="1"/>
</dbReference>
<dbReference type="Gene3D" id="4.10.520.10">
    <property type="entry name" value="IHF-like DNA-binding proteins"/>
    <property type="match status" value="1"/>
</dbReference>
<dbReference type="HAMAP" id="MF_00380">
    <property type="entry name" value="IHF_alpha"/>
    <property type="match status" value="1"/>
</dbReference>
<dbReference type="InterPro" id="IPR000119">
    <property type="entry name" value="Hist_DNA-bd"/>
</dbReference>
<dbReference type="InterPro" id="IPR020816">
    <property type="entry name" value="Histone-like_DNA-bd_CS"/>
</dbReference>
<dbReference type="InterPro" id="IPR010992">
    <property type="entry name" value="IHF-like_DNA-bd_dom_sf"/>
</dbReference>
<dbReference type="InterPro" id="IPR005684">
    <property type="entry name" value="IHF_alpha"/>
</dbReference>
<dbReference type="NCBIfam" id="TIGR00987">
    <property type="entry name" value="himA"/>
    <property type="match status" value="1"/>
</dbReference>
<dbReference type="NCBIfam" id="NF001401">
    <property type="entry name" value="PRK00285.1"/>
    <property type="match status" value="1"/>
</dbReference>
<dbReference type="PANTHER" id="PTHR33175">
    <property type="entry name" value="DNA-BINDING PROTEIN HU"/>
    <property type="match status" value="1"/>
</dbReference>
<dbReference type="PANTHER" id="PTHR33175:SF2">
    <property type="entry name" value="INTEGRATION HOST FACTOR SUBUNIT ALPHA"/>
    <property type="match status" value="1"/>
</dbReference>
<dbReference type="Pfam" id="PF00216">
    <property type="entry name" value="Bac_DNA_binding"/>
    <property type="match status" value="1"/>
</dbReference>
<dbReference type="PRINTS" id="PR01727">
    <property type="entry name" value="DNABINDINGHU"/>
</dbReference>
<dbReference type="SMART" id="SM00411">
    <property type="entry name" value="BHL"/>
    <property type="match status" value="1"/>
</dbReference>
<dbReference type="SUPFAM" id="SSF47729">
    <property type="entry name" value="IHF-like DNA-binding proteins"/>
    <property type="match status" value="1"/>
</dbReference>
<dbReference type="PROSITE" id="PS00045">
    <property type="entry name" value="HISTONE_LIKE"/>
    <property type="match status" value="1"/>
</dbReference>
<reference key="1">
    <citation type="journal article" date="2000" name="Science">
        <title>Complete genome sequence of Neisseria meningitidis serogroup B strain MC58.</title>
        <authorList>
            <person name="Tettelin H."/>
            <person name="Saunders N.J."/>
            <person name="Heidelberg J.F."/>
            <person name="Jeffries A.C."/>
            <person name="Nelson K.E."/>
            <person name="Eisen J.A."/>
            <person name="Ketchum K.A."/>
            <person name="Hood D.W."/>
            <person name="Peden J.F."/>
            <person name="Dodson R.J."/>
            <person name="Nelson W.C."/>
            <person name="Gwinn M.L."/>
            <person name="DeBoy R.T."/>
            <person name="Peterson J.D."/>
            <person name="Hickey E.K."/>
            <person name="Haft D.H."/>
            <person name="Salzberg S.L."/>
            <person name="White O."/>
            <person name="Fleischmann R.D."/>
            <person name="Dougherty B.A."/>
            <person name="Mason T.M."/>
            <person name="Ciecko A."/>
            <person name="Parksey D.S."/>
            <person name="Blair E."/>
            <person name="Cittone H."/>
            <person name="Clark E.B."/>
            <person name="Cotton M.D."/>
            <person name="Utterback T.R."/>
            <person name="Khouri H.M."/>
            <person name="Qin H."/>
            <person name="Vamathevan J.J."/>
            <person name="Gill J."/>
            <person name="Scarlato V."/>
            <person name="Masignani V."/>
            <person name="Pizza M."/>
            <person name="Grandi G."/>
            <person name="Sun L."/>
            <person name="Smith H.O."/>
            <person name="Fraser C.M."/>
            <person name="Moxon E.R."/>
            <person name="Rappuoli R."/>
            <person name="Venter J.C."/>
        </authorList>
    </citation>
    <scope>NUCLEOTIDE SEQUENCE [LARGE SCALE GENOMIC DNA]</scope>
    <source>
        <strain>ATCC BAA-335 / MC58</strain>
    </source>
</reference>
<name>IHFA_NEIMB</name>
<keyword id="KW-0233">DNA recombination</keyword>
<keyword id="KW-0238">DNA-binding</keyword>
<keyword id="KW-1185">Reference proteome</keyword>
<keyword id="KW-0804">Transcription</keyword>
<keyword id="KW-0805">Transcription regulation</keyword>
<keyword id="KW-0810">Translation regulation</keyword>
<accession>P64393</accession>
<accession>Q9JR90</accession>
<evidence type="ECO:0000250" key="1"/>
<evidence type="ECO:0000256" key="2">
    <source>
        <dbReference type="SAM" id="MobiDB-lite"/>
    </source>
</evidence>
<evidence type="ECO:0000305" key="3"/>
<gene>
    <name type="primary">ihfA</name>
    <name type="synonym">himA</name>
    <name type="ordered locus">NMB0729</name>
</gene>
<protein>
    <recommendedName>
        <fullName>Integration host factor subunit alpha</fullName>
        <shortName>IHF-alpha</shortName>
    </recommendedName>
</protein>
<organism>
    <name type="scientific">Neisseria meningitidis serogroup B (strain ATCC BAA-335 / MC58)</name>
    <dbReference type="NCBI Taxonomy" id="122586"/>
    <lineage>
        <taxon>Bacteria</taxon>
        <taxon>Pseudomonadati</taxon>
        <taxon>Pseudomonadota</taxon>
        <taxon>Betaproteobacteria</taxon>
        <taxon>Neisseriales</taxon>
        <taxon>Neisseriaceae</taxon>
        <taxon>Neisseria</taxon>
    </lineage>
</organism>
<comment type="function">
    <text evidence="1">This protein is one of the two subunits of integration host factor, a specific DNA-binding protein that functions in genetic recombination as well as in transcriptional and translational control.</text>
</comment>
<comment type="subunit">
    <text evidence="1">Heterodimer of an alpha and a beta chain.</text>
</comment>
<comment type="similarity">
    <text evidence="3">Belongs to the bacterial histone-like protein family.</text>
</comment>
<feature type="chain" id="PRO_0000105014" description="Integration host factor subunit alpha">
    <location>
        <begin position="1"/>
        <end position="100"/>
    </location>
</feature>
<feature type="region of interest" description="Disordered" evidence="2">
    <location>
        <begin position="53"/>
        <end position="72"/>
    </location>
</feature>
<sequence>MTLTKAELADILVDKVSNVTKNDAKEIVELFFEEIRSTLASGEEIKISGFGNFQLRDKPQRPGRNPKTGEEVPITARRVVTFHASQKLKSMVEHYYDKQR</sequence>